<proteinExistence type="inferred from homology"/>
<feature type="chain" id="PRO_1000129350" description="Ribonuclease PH">
    <location>
        <begin position="1"/>
        <end position="237"/>
    </location>
</feature>
<feature type="binding site" evidence="1">
    <location>
        <position position="86"/>
    </location>
    <ligand>
        <name>phosphate</name>
        <dbReference type="ChEBI" id="CHEBI:43474"/>
        <note>substrate</note>
    </ligand>
</feature>
<feature type="binding site" evidence="1">
    <location>
        <begin position="124"/>
        <end position="126"/>
    </location>
    <ligand>
        <name>phosphate</name>
        <dbReference type="ChEBI" id="CHEBI:43474"/>
        <note>substrate</note>
    </ligand>
</feature>
<comment type="function">
    <text evidence="1">Phosphorolytic 3'-5' exoribonuclease that plays an important role in tRNA 3'-end maturation. Removes nucleotide residues following the 3'-CCA terminus of tRNAs; can also add nucleotides to the ends of RNA molecules by using nucleoside diphosphates as substrates, but this may not be physiologically important. Probably plays a role in initiation of 16S rRNA degradation (leading to ribosome degradation) during starvation.</text>
</comment>
<comment type="catalytic activity">
    <reaction evidence="1">
        <text>tRNA(n+1) + phosphate = tRNA(n) + a ribonucleoside 5'-diphosphate</text>
        <dbReference type="Rhea" id="RHEA:10628"/>
        <dbReference type="Rhea" id="RHEA-COMP:17343"/>
        <dbReference type="Rhea" id="RHEA-COMP:17344"/>
        <dbReference type="ChEBI" id="CHEBI:43474"/>
        <dbReference type="ChEBI" id="CHEBI:57930"/>
        <dbReference type="ChEBI" id="CHEBI:173114"/>
        <dbReference type="EC" id="2.7.7.56"/>
    </reaction>
</comment>
<comment type="subunit">
    <text evidence="1">Homohexameric ring arranged as a trimer of dimers.</text>
</comment>
<comment type="similarity">
    <text evidence="1">Belongs to the RNase PH family.</text>
</comment>
<name>RNPH_METPB</name>
<reference key="1">
    <citation type="submission" date="2008-04" db="EMBL/GenBank/DDBJ databases">
        <title>Complete sequence of chromosome of Methylobacterium populi BJ001.</title>
        <authorList>
            <consortium name="US DOE Joint Genome Institute"/>
            <person name="Copeland A."/>
            <person name="Lucas S."/>
            <person name="Lapidus A."/>
            <person name="Glavina del Rio T."/>
            <person name="Dalin E."/>
            <person name="Tice H."/>
            <person name="Bruce D."/>
            <person name="Goodwin L."/>
            <person name="Pitluck S."/>
            <person name="Chertkov O."/>
            <person name="Brettin T."/>
            <person name="Detter J.C."/>
            <person name="Han C."/>
            <person name="Kuske C.R."/>
            <person name="Schmutz J."/>
            <person name="Larimer F."/>
            <person name="Land M."/>
            <person name="Hauser L."/>
            <person name="Kyrpides N."/>
            <person name="Mikhailova N."/>
            <person name="Marx C."/>
            <person name="Richardson P."/>
        </authorList>
    </citation>
    <scope>NUCLEOTIDE SEQUENCE [LARGE SCALE GENOMIC DNA]</scope>
    <source>
        <strain>ATCC BAA-705 / NCIMB 13946 / BJ001</strain>
    </source>
</reference>
<keyword id="KW-0548">Nucleotidyltransferase</keyword>
<keyword id="KW-0694">RNA-binding</keyword>
<keyword id="KW-0698">rRNA processing</keyword>
<keyword id="KW-0808">Transferase</keyword>
<keyword id="KW-0819">tRNA processing</keyword>
<keyword id="KW-0820">tRNA-binding</keyword>
<evidence type="ECO:0000255" key="1">
    <source>
        <dbReference type="HAMAP-Rule" id="MF_00564"/>
    </source>
</evidence>
<organism>
    <name type="scientific">Methylorubrum populi (strain ATCC BAA-705 / NCIMB 13946 / BJ001)</name>
    <name type="common">Methylobacterium populi</name>
    <dbReference type="NCBI Taxonomy" id="441620"/>
    <lineage>
        <taxon>Bacteria</taxon>
        <taxon>Pseudomonadati</taxon>
        <taxon>Pseudomonadota</taxon>
        <taxon>Alphaproteobacteria</taxon>
        <taxon>Hyphomicrobiales</taxon>
        <taxon>Methylobacteriaceae</taxon>
        <taxon>Methylorubrum</taxon>
    </lineage>
</organism>
<gene>
    <name evidence="1" type="primary">rph</name>
    <name type="ordered locus">Mpop_0469</name>
</gene>
<accession>B1ZJ73</accession>
<protein>
    <recommendedName>
        <fullName evidence="1">Ribonuclease PH</fullName>
        <shortName evidence="1">RNase PH</shortName>
        <ecNumber evidence="1">2.7.7.56</ecNumber>
    </recommendedName>
    <alternativeName>
        <fullName evidence="1">tRNA nucleotidyltransferase</fullName>
    </alternativeName>
</protein>
<sequence length="237" mass="25628">MRPSKRAADAMRDVTLERAVARYAEGSCLVTFGNTRVLCTASLEERGPPWLRGSGKGWVTAEYAMLPRATHERTRREVNSGKPSGRTQEIQRLIGRSLRAVTNLPALGERQITVDCDVIQADGGTRTASITGAWVALHDCFAWMRARSIISVDPLKDHVAAVSCGIYKGQPVLDLDYAEDSAAETDANFVVTGKGGIVEVQGTAEMEPFSEAQFIELLALAKGGIANLVELQRKAIA</sequence>
<dbReference type="EC" id="2.7.7.56" evidence="1"/>
<dbReference type="EMBL" id="CP001029">
    <property type="protein sequence ID" value="ACB78647.1"/>
    <property type="molecule type" value="Genomic_DNA"/>
</dbReference>
<dbReference type="RefSeq" id="WP_012452405.1">
    <property type="nucleotide sequence ID" value="NC_010725.1"/>
</dbReference>
<dbReference type="SMR" id="B1ZJ73"/>
<dbReference type="STRING" id="441620.Mpop_0469"/>
<dbReference type="KEGG" id="mpo:Mpop_0469"/>
<dbReference type="eggNOG" id="COG0689">
    <property type="taxonomic scope" value="Bacteria"/>
</dbReference>
<dbReference type="HOGENOM" id="CLU_050858_0_0_5"/>
<dbReference type="OrthoDB" id="9802265at2"/>
<dbReference type="Proteomes" id="UP000007136">
    <property type="component" value="Chromosome"/>
</dbReference>
<dbReference type="GO" id="GO:0000175">
    <property type="term" value="F:3'-5'-RNA exonuclease activity"/>
    <property type="evidence" value="ECO:0007669"/>
    <property type="project" value="UniProtKB-UniRule"/>
</dbReference>
<dbReference type="GO" id="GO:0000049">
    <property type="term" value="F:tRNA binding"/>
    <property type="evidence" value="ECO:0007669"/>
    <property type="project" value="UniProtKB-UniRule"/>
</dbReference>
<dbReference type="GO" id="GO:0009022">
    <property type="term" value="F:tRNA nucleotidyltransferase activity"/>
    <property type="evidence" value="ECO:0007669"/>
    <property type="project" value="UniProtKB-UniRule"/>
</dbReference>
<dbReference type="GO" id="GO:0016075">
    <property type="term" value="P:rRNA catabolic process"/>
    <property type="evidence" value="ECO:0007669"/>
    <property type="project" value="UniProtKB-UniRule"/>
</dbReference>
<dbReference type="GO" id="GO:0006364">
    <property type="term" value="P:rRNA processing"/>
    <property type="evidence" value="ECO:0007669"/>
    <property type="project" value="UniProtKB-KW"/>
</dbReference>
<dbReference type="GO" id="GO:0008033">
    <property type="term" value="P:tRNA processing"/>
    <property type="evidence" value="ECO:0007669"/>
    <property type="project" value="UniProtKB-UniRule"/>
</dbReference>
<dbReference type="CDD" id="cd11362">
    <property type="entry name" value="RNase_PH_bact"/>
    <property type="match status" value="1"/>
</dbReference>
<dbReference type="FunFam" id="3.30.230.70:FF:000003">
    <property type="entry name" value="Ribonuclease PH"/>
    <property type="match status" value="1"/>
</dbReference>
<dbReference type="Gene3D" id="3.30.230.70">
    <property type="entry name" value="GHMP Kinase, N-terminal domain"/>
    <property type="match status" value="1"/>
</dbReference>
<dbReference type="HAMAP" id="MF_00564">
    <property type="entry name" value="RNase_PH"/>
    <property type="match status" value="1"/>
</dbReference>
<dbReference type="InterPro" id="IPR001247">
    <property type="entry name" value="ExoRNase_PH_dom1"/>
</dbReference>
<dbReference type="InterPro" id="IPR015847">
    <property type="entry name" value="ExoRNase_PH_dom2"/>
</dbReference>
<dbReference type="InterPro" id="IPR036345">
    <property type="entry name" value="ExoRNase_PH_dom2_sf"/>
</dbReference>
<dbReference type="InterPro" id="IPR027408">
    <property type="entry name" value="PNPase/RNase_PH_dom_sf"/>
</dbReference>
<dbReference type="InterPro" id="IPR020568">
    <property type="entry name" value="Ribosomal_Su5_D2-typ_SF"/>
</dbReference>
<dbReference type="InterPro" id="IPR050080">
    <property type="entry name" value="RNase_PH"/>
</dbReference>
<dbReference type="InterPro" id="IPR002381">
    <property type="entry name" value="RNase_PH_bac-type"/>
</dbReference>
<dbReference type="InterPro" id="IPR018336">
    <property type="entry name" value="RNase_PH_CS"/>
</dbReference>
<dbReference type="NCBIfam" id="TIGR01966">
    <property type="entry name" value="RNasePH"/>
    <property type="match status" value="1"/>
</dbReference>
<dbReference type="PANTHER" id="PTHR11953">
    <property type="entry name" value="EXOSOME COMPLEX COMPONENT"/>
    <property type="match status" value="1"/>
</dbReference>
<dbReference type="PANTHER" id="PTHR11953:SF0">
    <property type="entry name" value="EXOSOME COMPLEX COMPONENT RRP41"/>
    <property type="match status" value="1"/>
</dbReference>
<dbReference type="Pfam" id="PF01138">
    <property type="entry name" value="RNase_PH"/>
    <property type="match status" value="1"/>
</dbReference>
<dbReference type="Pfam" id="PF03725">
    <property type="entry name" value="RNase_PH_C"/>
    <property type="match status" value="1"/>
</dbReference>
<dbReference type="SUPFAM" id="SSF55666">
    <property type="entry name" value="Ribonuclease PH domain 2-like"/>
    <property type="match status" value="1"/>
</dbReference>
<dbReference type="SUPFAM" id="SSF54211">
    <property type="entry name" value="Ribosomal protein S5 domain 2-like"/>
    <property type="match status" value="1"/>
</dbReference>
<dbReference type="PROSITE" id="PS01277">
    <property type="entry name" value="RIBONUCLEASE_PH"/>
    <property type="match status" value="1"/>
</dbReference>